<gene>
    <name type="ordered locus">TP_0318</name>
</gene>
<proteinExistence type="predicted"/>
<organism>
    <name type="scientific">Treponema pallidum (strain Nichols)</name>
    <dbReference type="NCBI Taxonomy" id="243276"/>
    <lineage>
        <taxon>Bacteria</taxon>
        <taxon>Pseudomonadati</taxon>
        <taxon>Spirochaetota</taxon>
        <taxon>Spirochaetia</taxon>
        <taxon>Spirochaetales</taxon>
        <taxon>Treponemataceae</taxon>
        <taxon>Treponema</taxon>
    </lineage>
</organism>
<sequence>MRKIRGHSVTQGDKEVQGVVSFCVCAGGRVRGLLDRAGGGGEVAWGACGGGVCCVWWWG</sequence>
<feature type="chain" id="PRO_0000202234" description="Uncharacterized protein TP_0318">
    <location>
        <begin position="1"/>
        <end position="59"/>
    </location>
</feature>
<protein>
    <recommendedName>
        <fullName>Uncharacterized protein TP_0318</fullName>
    </recommendedName>
</protein>
<accession>O83338</accession>
<reference key="1">
    <citation type="journal article" date="1998" name="Science">
        <title>Complete genome sequence of Treponema pallidum, the syphilis spirochete.</title>
        <authorList>
            <person name="Fraser C.M."/>
            <person name="Norris S.J."/>
            <person name="Weinstock G.M."/>
            <person name="White O."/>
            <person name="Sutton G.G."/>
            <person name="Dodson R.J."/>
            <person name="Gwinn M.L."/>
            <person name="Hickey E.K."/>
            <person name="Clayton R.A."/>
            <person name="Ketchum K.A."/>
            <person name="Sodergren E."/>
            <person name="Hardham J.M."/>
            <person name="McLeod M.P."/>
            <person name="Salzberg S.L."/>
            <person name="Peterson J.D."/>
            <person name="Khalak H.G."/>
            <person name="Richardson D.L."/>
            <person name="Howell J.K."/>
            <person name="Chidambaram M."/>
            <person name="Utterback T.R."/>
            <person name="McDonald L.A."/>
            <person name="Artiach P."/>
            <person name="Bowman C."/>
            <person name="Cotton M.D."/>
            <person name="Fujii C."/>
            <person name="Garland S.A."/>
            <person name="Hatch B."/>
            <person name="Horst K."/>
            <person name="Roberts K.M."/>
            <person name="Sandusky M."/>
            <person name="Weidman J.F."/>
            <person name="Smith H.O."/>
            <person name="Venter J.C."/>
        </authorList>
    </citation>
    <scope>NUCLEOTIDE SEQUENCE [LARGE SCALE GENOMIC DNA]</scope>
    <source>
        <strain>Nichols</strain>
    </source>
</reference>
<keyword id="KW-1185">Reference proteome</keyword>
<name>Y318_TREPA</name>
<dbReference type="EMBL" id="AE000520">
    <property type="protein sequence ID" value="AAC65307.1"/>
    <property type="molecule type" value="Genomic_DNA"/>
</dbReference>
<dbReference type="PIR" id="G71340">
    <property type="entry name" value="G71340"/>
</dbReference>
<dbReference type="RefSeq" id="WP_010881766.1">
    <property type="nucleotide sequence ID" value="NC_000919.1"/>
</dbReference>
<dbReference type="STRING" id="243276.TP_0318"/>
<dbReference type="EnsemblBacteria" id="AAC65307">
    <property type="protein sequence ID" value="AAC65307"/>
    <property type="gene ID" value="TP_0318"/>
</dbReference>
<dbReference type="KEGG" id="tpa:TP_0318"/>
<dbReference type="HOGENOM" id="CLU_210505_0_0_12"/>
<dbReference type="Proteomes" id="UP000000811">
    <property type="component" value="Chromosome"/>
</dbReference>